<name>YCF19_CYACA</name>
<organism>
    <name type="scientific">Cyanidium caldarium</name>
    <name type="common">Red alga</name>
    <dbReference type="NCBI Taxonomy" id="2771"/>
    <lineage>
        <taxon>Eukaryota</taxon>
        <taxon>Rhodophyta</taxon>
        <taxon>Bangiophyceae</taxon>
        <taxon>Cyanidiales</taxon>
        <taxon>Cyanidiaceae</taxon>
        <taxon>Cyanidium</taxon>
    </lineage>
</organism>
<sequence length="91" mass="10510">MKDGTDLILETTIAFLQIYIVLILLRMSLGWFPNINWYSQPFYSLSQLSDPYLNLFHGVFPSFLGIDFSPIIGITLIDFIIELLSRQLKPL</sequence>
<reference key="1">
    <citation type="journal article" date="2000" name="J. Mol. Evol.">
        <title>The structure and gene repertoire of an ancient red algal plastid genome.</title>
        <authorList>
            <person name="Gloeckner G."/>
            <person name="Rosenthal A."/>
            <person name="Valentin K.-U."/>
        </authorList>
    </citation>
    <scope>NUCLEOTIDE SEQUENCE [LARGE SCALE GENOMIC DNA]</scope>
    <source>
        <strain>RK-1</strain>
    </source>
</reference>
<protein>
    <recommendedName>
        <fullName>Uncharacterized protein ycf19</fullName>
    </recommendedName>
</protein>
<dbReference type="EMBL" id="AF022186">
    <property type="protein sequence ID" value="AAF13024.1"/>
    <property type="molecule type" value="Genomic_DNA"/>
</dbReference>
<dbReference type="RefSeq" id="NP_045021.1">
    <property type="nucleotide sequence ID" value="NC_001840.1"/>
</dbReference>
<dbReference type="SMR" id="Q9TM45"/>
<dbReference type="GeneID" id="800248"/>
<dbReference type="GO" id="GO:0009507">
    <property type="term" value="C:chloroplast"/>
    <property type="evidence" value="ECO:0007669"/>
    <property type="project" value="UniProtKB-SubCell"/>
</dbReference>
<dbReference type="GO" id="GO:0016020">
    <property type="term" value="C:membrane"/>
    <property type="evidence" value="ECO:0007669"/>
    <property type="project" value="InterPro"/>
</dbReference>
<dbReference type="GO" id="GO:0010020">
    <property type="term" value="P:chloroplast fission"/>
    <property type="evidence" value="ECO:0007669"/>
    <property type="project" value="TreeGrafter"/>
</dbReference>
<dbReference type="GO" id="GO:0090143">
    <property type="term" value="P:nucleoid organization"/>
    <property type="evidence" value="ECO:0007669"/>
    <property type="project" value="TreeGrafter"/>
</dbReference>
<dbReference type="InterPro" id="IPR003425">
    <property type="entry name" value="CCB3/YggT"/>
</dbReference>
<dbReference type="PANTHER" id="PTHR33219:SF14">
    <property type="entry name" value="PROTEIN COFACTOR ASSEMBLY OF COMPLEX C SUBUNIT B CCB3, CHLOROPLASTIC-RELATED"/>
    <property type="match status" value="1"/>
</dbReference>
<dbReference type="PANTHER" id="PTHR33219">
    <property type="entry name" value="YLMG HOMOLOG PROTEIN 2, CHLOROPLASTIC"/>
    <property type="match status" value="1"/>
</dbReference>
<dbReference type="Pfam" id="PF02325">
    <property type="entry name" value="YGGT"/>
    <property type="match status" value="1"/>
</dbReference>
<accession>Q9TM45</accession>
<gene>
    <name type="primary">ycf19</name>
    <name type="synonym">ycf49</name>
</gene>
<keyword id="KW-0150">Chloroplast</keyword>
<keyword id="KW-0934">Plastid</keyword>
<feature type="chain" id="PRO_0000217319" description="Uncharacterized protein ycf19">
    <location>
        <begin position="1"/>
        <end position="91"/>
    </location>
</feature>
<comment type="subcellular location">
    <subcellularLocation>
        <location>Plastid</location>
        <location>Chloroplast</location>
    </subcellularLocation>
</comment>
<comment type="similarity">
    <text evidence="1">Belongs to the ycf19 family.</text>
</comment>
<proteinExistence type="inferred from homology"/>
<geneLocation type="chloroplast"/>
<evidence type="ECO:0000305" key="1"/>